<gene>
    <name type="primary">mrp20</name>
    <name type="ORF">NCU08329</name>
</gene>
<name>RM41_NEUCR</name>
<organism>
    <name type="scientific">Neurospora crassa (strain ATCC 24698 / 74-OR23-1A / CBS 708.71 / DSM 1257 / FGSC 987)</name>
    <dbReference type="NCBI Taxonomy" id="367110"/>
    <lineage>
        <taxon>Eukaryota</taxon>
        <taxon>Fungi</taxon>
        <taxon>Dikarya</taxon>
        <taxon>Ascomycota</taxon>
        <taxon>Pezizomycotina</taxon>
        <taxon>Sordariomycetes</taxon>
        <taxon>Sordariomycetidae</taxon>
        <taxon>Sordariales</taxon>
        <taxon>Sordariaceae</taxon>
        <taxon>Neurospora</taxon>
    </lineage>
</organism>
<reference key="1">
    <citation type="journal article" date="2003" name="Nature">
        <title>The genome sequence of the filamentous fungus Neurospora crassa.</title>
        <authorList>
            <person name="Galagan J.E."/>
            <person name="Calvo S.E."/>
            <person name="Borkovich K.A."/>
            <person name="Selker E.U."/>
            <person name="Read N.D."/>
            <person name="Jaffe D.B."/>
            <person name="FitzHugh W."/>
            <person name="Ma L.-J."/>
            <person name="Smirnov S."/>
            <person name="Purcell S."/>
            <person name="Rehman B."/>
            <person name="Elkins T."/>
            <person name="Engels R."/>
            <person name="Wang S."/>
            <person name="Nielsen C.B."/>
            <person name="Butler J."/>
            <person name="Endrizzi M."/>
            <person name="Qui D."/>
            <person name="Ianakiev P."/>
            <person name="Bell-Pedersen D."/>
            <person name="Nelson M.A."/>
            <person name="Werner-Washburne M."/>
            <person name="Selitrennikoff C.P."/>
            <person name="Kinsey J.A."/>
            <person name="Braun E.L."/>
            <person name="Zelter A."/>
            <person name="Schulte U."/>
            <person name="Kothe G.O."/>
            <person name="Jedd G."/>
            <person name="Mewes H.-W."/>
            <person name="Staben C."/>
            <person name="Marcotte E."/>
            <person name="Greenberg D."/>
            <person name="Roy A."/>
            <person name="Foley K."/>
            <person name="Naylor J."/>
            <person name="Stange-Thomann N."/>
            <person name="Barrett R."/>
            <person name="Gnerre S."/>
            <person name="Kamal M."/>
            <person name="Kamvysselis M."/>
            <person name="Mauceli E.W."/>
            <person name="Bielke C."/>
            <person name="Rudd S."/>
            <person name="Frishman D."/>
            <person name="Krystofova S."/>
            <person name="Rasmussen C."/>
            <person name="Metzenberg R.L."/>
            <person name="Perkins D.D."/>
            <person name="Kroken S."/>
            <person name="Cogoni C."/>
            <person name="Macino G."/>
            <person name="Catcheside D.E.A."/>
            <person name="Li W."/>
            <person name="Pratt R.J."/>
            <person name="Osmani S.A."/>
            <person name="DeSouza C.P.C."/>
            <person name="Glass N.L."/>
            <person name="Orbach M.J."/>
            <person name="Berglund J.A."/>
            <person name="Voelker R."/>
            <person name="Yarden O."/>
            <person name="Plamann M."/>
            <person name="Seiler S."/>
            <person name="Dunlap J.C."/>
            <person name="Radford A."/>
            <person name="Aramayo R."/>
            <person name="Natvig D.O."/>
            <person name="Alex L.A."/>
            <person name="Mannhaupt G."/>
            <person name="Ebbole D.J."/>
            <person name="Freitag M."/>
            <person name="Paulsen I."/>
            <person name="Sachs M.S."/>
            <person name="Lander E.S."/>
            <person name="Nusbaum C."/>
            <person name="Birren B.W."/>
        </authorList>
    </citation>
    <scope>NUCLEOTIDE SEQUENCE [LARGE SCALE GENOMIC DNA]</scope>
    <source>
        <strain>ATCC 24698 / 74-OR23-1A / CBS 708.71 / DSM 1257 / FGSC 987</strain>
    </source>
</reference>
<reference key="2">
    <citation type="journal article" date="2006" name="FEMS Microbiol. Lett.">
        <title>Identification and comparative analysis of the large subunit mitochondrial ribosomal proteins of Neurospora crassa.</title>
        <authorList>
            <person name="Gan X."/>
            <person name="Arita K."/>
            <person name="Isono S."/>
            <person name="Kitakawa M."/>
            <person name="Yoshino K."/>
            <person name="Yonezawa K."/>
            <person name="Kato A."/>
            <person name="Inoue H."/>
            <person name="Isono K."/>
        </authorList>
    </citation>
    <scope>IDENTIFICATION IN THE MITOCHONDRIAL RIBOSOMAL LARGE COMPLEX</scope>
    <scope>IDENTIFICATION BY MASS SPECTROMETRY</scope>
</reference>
<reference evidence="7 8" key="3">
    <citation type="journal article" date="2020" name="Nat. Commun.">
        <title>Analysis of translating mitoribosome reveals functional characteristics of translation in mitochondria of fungi.</title>
        <authorList>
            <person name="Itoh Y."/>
            <person name="Naschberger A."/>
            <person name="Mortezaei N."/>
            <person name="Herrmann J.M."/>
            <person name="Amunts A."/>
        </authorList>
    </citation>
    <scope>STRUCTURE BY ELECTRON MICROSCOPY (2.74 ANGSTROMS)</scope>
</reference>
<keyword id="KW-0002">3D-structure</keyword>
<keyword id="KW-0496">Mitochondrion</keyword>
<keyword id="KW-1185">Reference proteome</keyword>
<keyword id="KW-0687">Ribonucleoprotein</keyword>
<keyword id="KW-0689">Ribosomal protein</keyword>
<protein>
    <recommendedName>
        <fullName evidence="4">Large ribosomal subunit protein uL23m</fullName>
    </recommendedName>
</protein>
<comment type="function">
    <text evidence="6">Component of the mitochondrial ribosome (mitoribosome), a dedicated translation machinery responsible for the synthesis of mitochondrial genome-encoded proteins, including at least some of the essential transmembrane subunits of the mitochondrial respiratory chain. The mitoribosomes are attached to the mitochondrial inner membrane and translation products are cotranslationally integrated into the membrane.</text>
</comment>
<comment type="subunit">
    <text evidence="2 3">Component of the mitochondrial large ribosomal subunit (mt-LSU). Mature N.crassa 74S mitochondrial ribosomes consist of a small (37S) and a large (54S) subunit. The 37S small subunit contains a 16S ribosomal RNA (16S mt-rRNA) and 32 different proteins. The 54S large subunit contains a 23S rRNA (23S mt-rRNA) and 42 different proteins. uL23m forms the wall of the exit tunnel.</text>
</comment>
<comment type="subcellular location">
    <subcellularLocation>
        <location evidence="2 3">Mitochondrion</location>
    </subcellularLocation>
</comment>
<comment type="similarity">
    <text evidence="5">Belongs to the universal ribosomal protein uL23 family.</text>
</comment>
<sequence length="228" mass="25967">MASVAKTGAEALRNAPFRVGKKQIFLPNHVITFVRPLPKQPPNLATFIVPLEFNKLDLRDYLYHVYNVEVTGVRSFVNQRMHEQRHGDVGNWRRPKSQKMMIAELAKPFVWPKPPAEDAREAFDYAMWKKQKTAQEQDTKFQGIRAQGEVVPPSQFEVTKDRKAIKARQSKFLSGEETWAPGKVNAFLNSKIVPEEEGWSEVEENLPLDESAESAAEESSSKGSETRQ</sequence>
<accession>Q7SA60</accession>
<proteinExistence type="evidence at protein level"/>
<feature type="chain" id="PRO_0000458619" description="Large ribosomal subunit protein uL23m">
    <location>
        <begin position="1"/>
        <end position="228"/>
    </location>
</feature>
<feature type="region of interest" description="Disordered" evidence="1">
    <location>
        <begin position="194"/>
        <end position="228"/>
    </location>
</feature>
<feature type="compositionally biased region" description="Acidic residues" evidence="1">
    <location>
        <begin position="195"/>
        <end position="216"/>
    </location>
</feature>
<dbReference type="EMBL" id="CM002239">
    <property type="protein sequence ID" value="EAA33306.1"/>
    <property type="molecule type" value="Genomic_DNA"/>
</dbReference>
<dbReference type="RefSeq" id="XP_962542.1">
    <property type="nucleotide sequence ID" value="XM_957449.2"/>
</dbReference>
<dbReference type="PDB" id="6YWS">
    <property type="method" value="EM"/>
    <property type="resolution" value="2.74 A"/>
    <property type="chains" value="P=1-228"/>
</dbReference>
<dbReference type="PDB" id="6YWV">
    <property type="method" value="EM"/>
    <property type="resolution" value="3.03 A"/>
    <property type="chains" value="P=1-228"/>
</dbReference>
<dbReference type="PDB" id="6YWX">
    <property type="method" value="EM"/>
    <property type="resolution" value="3.10 A"/>
    <property type="chains" value="P=1-228"/>
</dbReference>
<dbReference type="PDBsum" id="6YWS"/>
<dbReference type="PDBsum" id="6YWV"/>
<dbReference type="PDBsum" id="6YWX"/>
<dbReference type="EMDB" id="EMD-10973"/>
<dbReference type="EMDB" id="EMD-10977"/>
<dbReference type="EMDB" id="EMD-10978"/>
<dbReference type="SMR" id="Q7SA60"/>
<dbReference type="STRING" id="367110.Q7SA60"/>
<dbReference type="PaxDb" id="5141-EFNCRP00000008424"/>
<dbReference type="EnsemblFungi" id="EAA33306">
    <property type="protein sequence ID" value="EAA33306"/>
    <property type="gene ID" value="NCU08329"/>
</dbReference>
<dbReference type="GeneID" id="3878692"/>
<dbReference type="KEGG" id="ncr:NCU08329"/>
<dbReference type="VEuPathDB" id="FungiDB:NCU08329"/>
<dbReference type="HOGENOM" id="CLU_086423_2_0_1"/>
<dbReference type="InParanoid" id="Q7SA60"/>
<dbReference type="OMA" id="LPPNEAC"/>
<dbReference type="OrthoDB" id="275582at2759"/>
<dbReference type="Proteomes" id="UP000001805">
    <property type="component" value="Chromosome 4, Linkage Group IV"/>
</dbReference>
<dbReference type="GO" id="GO:0005762">
    <property type="term" value="C:mitochondrial large ribosomal subunit"/>
    <property type="evidence" value="ECO:0000318"/>
    <property type="project" value="GO_Central"/>
</dbReference>
<dbReference type="GO" id="GO:0003735">
    <property type="term" value="F:structural constituent of ribosome"/>
    <property type="evidence" value="ECO:0000318"/>
    <property type="project" value="GO_Central"/>
</dbReference>
<dbReference type="GO" id="GO:0032543">
    <property type="term" value="P:mitochondrial translation"/>
    <property type="evidence" value="ECO:0000318"/>
    <property type="project" value="GO_Central"/>
</dbReference>
<dbReference type="FunFam" id="3.30.70.330:FF:000687">
    <property type="entry name" value="54S ribosomal protein L23, mitochondrial"/>
    <property type="match status" value="1"/>
</dbReference>
<dbReference type="Gene3D" id="3.30.70.330">
    <property type="match status" value="1"/>
</dbReference>
<dbReference type="InterPro" id="IPR012677">
    <property type="entry name" value="Nucleotide-bd_a/b_plait_sf"/>
</dbReference>
<dbReference type="InterPro" id="IPR013025">
    <property type="entry name" value="Ribosomal_uL23-like"/>
</dbReference>
<dbReference type="InterPro" id="IPR012678">
    <property type="entry name" value="Ribosomal_uL23/eL15/eS24_sf"/>
</dbReference>
<dbReference type="PANTHER" id="PTHR12059:SF5">
    <property type="entry name" value="LARGE RIBOSOMAL SUBUNIT PROTEIN UL23M"/>
    <property type="match status" value="1"/>
</dbReference>
<dbReference type="PANTHER" id="PTHR12059">
    <property type="entry name" value="RIBOSOMAL PROTEIN L23-RELATED"/>
    <property type="match status" value="1"/>
</dbReference>
<dbReference type="Pfam" id="PF00276">
    <property type="entry name" value="Ribosomal_L23"/>
    <property type="match status" value="1"/>
</dbReference>
<dbReference type="SUPFAM" id="SSF54189">
    <property type="entry name" value="Ribosomal proteins S24e, L23 and L15e"/>
    <property type="match status" value="1"/>
</dbReference>
<evidence type="ECO:0000256" key="1">
    <source>
        <dbReference type="SAM" id="MobiDB-lite"/>
    </source>
</evidence>
<evidence type="ECO:0000269" key="2">
    <source>
    </source>
</evidence>
<evidence type="ECO:0000269" key="3">
    <source>
    </source>
</evidence>
<evidence type="ECO:0000303" key="4">
    <source>
    </source>
</evidence>
<evidence type="ECO:0000305" key="5"/>
<evidence type="ECO:0000305" key="6">
    <source>
    </source>
</evidence>
<evidence type="ECO:0007744" key="7">
    <source>
        <dbReference type="PDB" id="6YWS"/>
    </source>
</evidence>
<evidence type="ECO:0007744" key="8">
    <source>
        <dbReference type="PDB" id="6YWV"/>
    </source>
</evidence>